<sequence length="510" mass="58219">MTGEKIRSLHKDQKPSKDEDLLEPDEEATAGGTFTRTGKLKSSKMFSNHKVIRSPSNPALLQNHHHQQISPITPGESKSDVYFPVHECVLKGDIRRLSSLIRSHSIGQKDSHGNTPLHLAVMLGNKECAHLLLAHNAPVKVKNAQGWSPLAEAISYGDRQMITALLRKLKQQSRESVEEKRPRLLKALKELGDFYLELHWDFQSWVPLLSRILPSDACKIYKQGINIRLDTTLIDFTDMKCQRGDLSFIFNGDAAPSESFVVLDNEQKVYQRIHHEESEMETEEEVDILMSSDIYSATLSTKSITFTRAQTGWLFREDKTERVGNFLADFYLVNGLILESRKRREHLTEEDILRNKAIMESLSKGGNLMEQNFEPVRRQSLTPPPPNTITWEEYISAENGKAPHLGRELVCKENKKTFKATIAMSQDFPLGIESLLNVLEVIAPFKHFNKLREFVQMKLPPGFPVKLDIPVFPTITATVTFQEFRYGEFEDAIFTIPDDYKEDPSRFPDL</sequence>
<protein>
    <recommendedName>
        <fullName>Ankyrin repeat domain-containing protein 13C-A</fullName>
    </recommendedName>
</protein>
<reference key="1">
    <citation type="submission" date="2004-05" db="EMBL/GenBank/DDBJ databases">
        <authorList>
            <consortium name="NIH - Xenopus Gene Collection (XGC) project"/>
        </authorList>
    </citation>
    <scope>NUCLEOTIDE SEQUENCE [LARGE SCALE MRNA]</scope>
    <source>
        <tissue>Egg</tissue>
    </source>
</reference>
<evidence type="ECO:0000250" key="1"/>
<evidence type="ECO:0000256" key="2">
    <source>
        <dbReference type="SAM" id="MobiDB-lite"/>
    </source>
</evidence>
<accession>Q6NRD0</accession>
<dbReference type="EMBL" id="BC070826">
    <property type="protein sequence ID" value="AAH70826.1"/>
    <property type="molecule type" value="mRNA"/>
</dbReference>
<dbReference type="RefSeq" id="NP_001084851.1">
    <property type="nucleotide sequence ID" value="NM_001091382.1"/>
</dbReference>
<dbReference type="SMR" id="Q6NRD0"/>
<dbReference type="DNASU" id="431897"/>
<dbReference type="GeneID" id="431897"/>
<dbReference type="KEGG" id="xla:431897"/>
<dbReference type="AGR" id="Xenbase:XB-GENE-5828147"/>
<dbReference type="CTD" id="431897"/>
<dbReference type="Xenbase" id="XB-GENE-5828147">
    <property type="gene designation" value="ankrd13c.L"/>
</dbReference>
<dbReference type="OMA" id="FRYGEFE"/>
<dbReference type="OrthoDB" id="1585644at2759"/>
<dbReference type="Proteomes" id="UP000186698">
    <property type="component" value="Chromosome 4L"/>
</dbReference>
<dbReference type="Bgee" id="431897">
    <property type="expression patterns" value="Expressed in egg cell and 19 other cell types or tissues"/>
</dbReference>
<dbReference type="GO" id="GO:0005737">
    <property type="term" value="C:cytoplasm"/>
    <property type="evidence" value="ECO:0000318"/>
    <property type="project" value="GO_Central"/>
</dbReference>
<dbReference type="GO" id="GO:0005789">
    <property type="term" value="C:endoplasmic reticulum membrane"/>
    <property type="evidence" value="ECO:0007669"/>
    <property type="project" value="UniProtKB-SubCell"/>
</dbReference>
<dbReference type="GO" id="GO:0005102">
    <property type="term" value="F:signaling receptor binding"/>
    <property type="evidence" value="ECO:0000318"/>
    <property type="project" value="GO_Central"/>
</dbReference>
<dbReference type="GO" id="GO:0006621">
    <property type="term" value="P:protein retention in ER lumen"/>
    <property type="evidence" value="ECO:0000318"/>
    <property type="project" value="GO_Central"/>
</dbReference>
<dbReference type="FunFam" id="1.25.40.20:FF:000073">
    <property type="entry name" value="Ankyrin repeat domain-containing protein 13C"/>
    <property type="match status" value="1"/>
</dbReference>
<dbReference type="Gene3D" id="1.25.40.20">
    <property type="entry name" value="Ankyrin repeat-containing domain"/>
    <property type="match status" value="1"/>
</dbReference>
<dbReference type="InterPro" id="IPR021832">
    <property type="entry name" value="ANKRD13"/>
</dbReference>
<dbReference type="InterPro" id="IPR055285">
    <property type="entry name" value="ANKRD13_C"/>
</dbReference>
<dbReference type="InterPro" id="IPR002110">
    <property type="entry name" value="Ankyrin_rpt"/>
</dbReference>
<dbReference type="InterPro" id="IPR036770">
    <property type="entry name" value="Ankyrin_rpt-contain_sf"/>
</dbReference>
<dbReference type="PANTHER" id="PTHR12447">
    <property type="entry name" value="ANKYRIN REPEAT DOMAIN-CONTAINING PROTEIN 13"/>
    <property type="match status" value="1"/>
</dbReference>
<dbReference type="PANTHER" id="PTHR12447:SF25">
    <property type="entry name" value="ANKYRIN REPEAT DOMAIN-CONTAINING PROTEIN 13C"/>
    <property type="match status" value="1"/>
</dbReference>
<dbReference type="Pfam" id="PF12796">
    <property type="entry name" value="Ank_2"/>
    <property type="match status" value="1"/>
</dbReference>
<dbReference type="Pfam" id="PF11904">
    <property type="entry name" value="ANKRD13_C"/>
    <property type="match status" value="1"/>
</dbReference>
<dbReference type="SMART" id="SM00248">
    <property type="entry name" value="ANK"/>
    <property type="match status" value="2"/>
</dbReference>
<dbReference type="SUPFAM" id="SSF48403">
    <property type="entry name" value="Ankyrin repeat"/>
    <property type="match status" value="1"/>
</dbReference>
<dbReference type="PROSITE" id="PS50297">
    <property type="entry name" value="ANK_REP_REGION"/>
    <property type="match status" value="1"/>
</dbReference>
<dbReference type="PROSITE" id="PS50088">
    <property type="entry name" value="ANK_REPEAT"/>
    <property type="match status" value="1"/>
</dbReference>
<name>A13CA_XENLA</name>
<proteinExistence type="evidence at transcript level"/>
<comment type="function">
    <text evidence="1">Acts as a molecular chaperone for G protein-coupled receptors, regulating their biogenesis and exit from the ER.</text>
</comment>
<comment type="subcellular location">
    <subcellularLocation>
        <location evidence="1">Endoplasmic reticulum membrane</location>
    </subcellularLocation>
    <text evidence="1">Associated with the cytosolic side.</text>
</comment>
<gene>
    <name type="primary">ankrd13c-a</name>
</gene>
<feature type="chain" id="PRO_0000240648" description="Ankyrin repeat domain-containing protein 13C-A">
    <location>
        <begin position="1"/>
        <end position="510"/>
    </location>
</feature>
<feature type="repeat" description="ANK 1">
    <location>
        <begin position="80"/>
        <end position="111"/>
    </location>
</feature>
<feature type="repeat" description="ANK 2">
    <location>
        <begin position="112"/>
        <end position="141"/>
    </location>
</feature>
<feature type="repeat" description="ANK 3">
    <location>
        <begin position="145"/>
        <end position="174"/>
    </location>
</feature>
<feature type="region of interest" description="Disordered" evidence="2">
    <location>
        <begin position="1"/>
        <end position="35"/>
    </location>
</feature>
<feature type="compositionally biased region" description="Basic and acidic residues" evidence="2">
    <location>
        <begin position="1"/>
        <end position="19"/>
    </location>
</feature>
<keyword id="KW-0040">ANK repeat</keyword>
<keyword id="KW-0143">Chaperone</keyword>
<keyword id="KW-0256">Endoplasmic reticulum</keyword>
<keyword id="KW-0472">Membrane</keyword>
<keyword id="KW-1185">Reference proteome</keyword>
<keyword id="KW-0677">Repeat</keyword>
<organism>
    <name type="scientific">Xenopus laevis</name>
    <name type="common">African clawed frog</name>
    <dbReference type="NCBI Taxonomy" id="8355"/>
    <lineage>
        <taxon>Eukaryota</taxon>
        <taxon>Metazoa</taxon>
        <taxon>Chordata</taxon>
        <taxon>Craniata</taxon>
        <taxon>Vertebrata</taxon>
        <taxon>Euteleostomi</taxon>
        <taxon>Amphibia</taxon>
        <taxon>Batrachia</taxon>
        <taxon>Anura</taxon>
        <taxon>Pipoidea</taxon>
        <taxon>Pipidae</taxon>
        <taxon>Xenopodinae</taxon>
        <taxon>Xenopus</taxon>
        <taxon>Xenopus</taxon>
    </lineage>
</organism>